<evidence type="ECO:0000255" key="1"/>
<evidence type="ECO:0000255" key="2">
    <source>
        <dbReference type="PROSITE-ProRule" id="PRU00114"/>
    </source>
</evidence>
<evidence type="ECO:0000303" key="3">
    <source>
    </source>
</evidence>
<evidence type="ECO:0000303" key="4">
    <source>
    </source>
</evidence>
<evidence type="ECO:0000303" key="5">
    <source>
    </source>
</evidence>
<evidence type="ECO:0000303" key="6">
    <source>
    </source>
</evidence>
<evidence type="ECO:0000303" key="7">
    <source>
    </source>
</evidence>
<evidence type="ECO:0000303" key="8">
    <source>
    </source>
</evidence>
<evidence type="ECO:0000303" key="9">
    <source ref="3"/>
</evidence>
<evidence type="ECO:0000305" key="10"/>
<evidence type="ECO:0000312" key="11">
    <source>
        <dbReference type="HGNC" id="HGNC:12284"/>
    </source>
</evidence>
<protein>
    <recommendedName>
        <fullName evidence="10">Probable non-functional T cell receptor gamma variable</fullName>
    </recommendedName>
</protein>
<reference key="1">
    <citation type="journal article" date="2003" name="Nature">
        <title>The DNA sequence of human chromosome 7.</title>
        <authorList>
            <person name="Hillier L.W."/>
            <person name="Fulton R.S."/>
            <person name="Fulton L.A."/>
            <person name="Graves T.A."/>
            <person name="Pepin K.H."/>
            <person name="Wagner-McPherson C."/>
            <person name="Layman D."/>
            <person name="Maas J."/>
            <person name="Jaeger S."/>
            <person name="Walker R."/>
            <person name="Wylie K."/>
            <person name="Sekhon M."/>
            <person name="Becker M.C."/>
            <person name="O'Laughlin M.D."/>
            <person name="Schaller M.E."/>
            <person name="Fewell G.A."/>
            <person name="Delehaunty K.D."/>
            <person name="Miner T.L."/>
            <person name="Nash W.E."/>
            <person name="Cordes M."/>
            <person name="Du H."/>
            <person name="Sun H."/>
            <person name="Edwards J."/>
            <person name="Bradshaw-Cordum H."/>
            <person name="Ali J."/>
            <person name="Andrews S."/>
            <person name="Isak A."/>
            <person name="Vanbrunt A."/>
            <person name="Nguyen C."/>
            <person name="Du F."/>
            <person name="Lamar B."/>
            <person name="Courtney L."/>
            <person name="Kalicki J."/>
            <person name="Ozersky P."/>
            <person name="Bielicki L."/>
            <person name="Scott K."/>
            <person name="Holmes A."/>
            <person name="Harkins R."/>
            <person name="Harris A."/>
            <person name="Strong C.M."/>
            <person name="Hou S."/>
            <person name="Tomlinson C."/>
            <person name="Dauphin-Kohlberg S."/>
            <person name="Kozlowicz-Reilly A."/>
            <person name="Leonard S."/>
            <person name="Rohlfing T."/>
            <person name="Rock S.M."/>
            <person name="Tin-Wollam A.-M."/>
            <person name="Abbott A."/>
            <person name="Minx P."/>
            <person name="Maupin R."/>
            <person name="Strowmatt C."/>
            <person name="Latreille P."/>
            <person name="Miller N."/>
            <person name="Johnson D."/>
            <person name="Murray J."/>
            <person name="Woessner J.P."/>
            <person name="Wendl M.C."/>
            <person name="Yang S.-P."/>
            <person name="Schultz B.R."/>
            <person name="Wallis J.W."/>
            <person name="Spieth J."/>
            <person name="Bieri T.A."/>
            <person name="Nelson J.O."/>
            <person name="Berkowicz N."/>
            <person name="Wohldmann P.E."/>
            <person name="Cook L.L."/>
            <person name="Hickenbotham M.T."/>
            <person name="Eldred J."/>
            <person name="Williams D."/>
            <person name="Bedell J.A."/>
            <person name="Mardis E.R."/>
            <person name="Clifton S.W."/>
            <person name="Chissoe S.L."/>
            <person name="Marra M.A."/>
            <person name="Raymond C."/>
            <person name="Haugen E."/>
            <person name="Gillett W."/>
            <person name="Zhou Y."/>
            <person name="James R."/>
            <person name="Phelps K."/>
            <person name="Iadanoto S."/>
            <person name="Bubb K."/>
            <person name="Simms E."/>
            <person name="Levy R."/>
            <person name="Clendenning J."/>
            <person name="Kaul R."/>
            <person name="Kent W.J."/>
            <person name="Furey T.S."/>
            <person name="Baertsch R.A."/>
            <person name="Brent M.R."/>
            <person name="Keibler E."/>
            <person name="Flicek P."/>
            <person name="Bork P."/>
            <person name="Suyama M."/>
            <person name="Bailey J.A."/>
            <person name="Portnoy M.E."/>
            <person name="Torrents D."/>
            <person name="Chinwalla A.T."/>
            <person name="Gish W.R."/>
            <person name="Eddy S.R."/>
            <person name="McPherson J.D."/>
            <person name="Olson M.V."/>
            <person name="Eichler E.E."/>
            <person name="Green E.D."/>
            <person name="Waterston R.H."/>
            <person name="Wilson R.K."/>
        </authorList>
    </citation>
    <scope>NUCLEOTIDE SEQUENCE [LARGE SCALE GENOMIC DNA] (IMGT ALLELE TRGV1*01)</scope>
</reference>
<reference key="2">
    <citation type="journal article" date="1998" name="Exp. Clin. Immunogenet.">
        <title>IMGT (ImMunoGeneTics) locus on focus. A new section of Experimental and Clinical Immunogenetics.</title>
        <authorList>
            <person name="Lefranc M.P."/>
        </authorList>
    </citation>
    <scope>CHARACTERIZATION</scope>
</reference>
<reference key="3">
    <citation type="book" date="2001" name="The T Cell Receptor FactsBook.">
        <title>The T Cell Receptor FactsBook.</title>
        <editorList>
            <person name="Lefranc M.P."/>
            <person name="Lefranc G."/>
        </editorList>
        <authorList>
            <person name="Lefranc M.P."/>
            <person name="Lefranc G."/>
        </authorList>
    </citation>
    <scope>NOMENCLATURE</scope>
</reference>
<reference key="4">
    <citation type="journal article" date="2013" name="Nat. Rev. Immunol.">
        <title>Six-of-the-best: unique contributions of gammadelta T cells to immunology.</title>
        <authorList>
            <person name="Vantourout P."/>
            <person name="Hayday A."/>
        </authorList>
    </citation>
    <scope>REVIEW ON FUNCTION AND ANTIGEN RECOGNITION</scope>
</reference>
<reference key="5">
    <citation type="journal article" date="2014" name="Annu. Rev. Immunol.">
        <title>gammadelta T cells: first line of defense and beyond.</title>
        <authorList>
            <person name="Chien Y.H."/>
            <person name="Meyer C."/>
            <person name="Bonneville M."/>
        </authorList>
    </citation>
    <scope>REVIEW ONGAMMA DELTA T CELL RECEPTOR DIVERSITY</scope>
</reference>
<reference key="6">
    <citation type="journal article" date="2014" name="Front. Immunol.">
        <title>Immunoglobulin and T Cell Receptor Genes: IMGT((R)) and the Birth and Rise of Immunoinformatics.</title>
        <authorList>
            <person name="Lefranc M.P."/>
        </authorList>
    </citation>
    <scope>NOMENCLATURE</scope>
</reference>
<reference key="7">
    <citation type="journal article" date="2015" name="Front. Immunol.">
        <title>Five Layers of Receptor Signaling in gammadelta T-Cell Differentiation and Activation.</title>
        <authorList>
            <person name="Ribeiro S.T."/>
            <person name="Ribot J.C."/>
            <person name="Silva-Santos B."/>
        </authorList>
    </citation>
    <scope>REVIEW ON T CELL RECEPTOR SIGNALING</scope>
    <scope>SUBUNIT</scope>
</reference>
<reference key="8">
    <citation type="journal article" date="2017" name="Nat. Rev. Immunol.">
        <title>gammadelta T cells in homeostasis and host defence of epithelial barrier tissues.</title>
        <authorList>
            <person name="Nielsen M.M."/>
            <person name="Witherden D.A."/>
            <person name="Havran W.L."/>
        </authorList>
    </citation>
    <scope>REVIEW ON FUNCTION</scope>
</reference>
<name>TRGV1_HUMAN</name>
<keyword id="KW-1064">Adaptive immunity</keyword>
<keyword id="KW-1003">Cell membrane</keyword>
<keyword id="KW-1015">Disulfide bond</keyword>
<keyword id="KW-0325">Glycoprotein</keyword>
<keyword id="KW-0391">Immunity</keyword>
<keyword id="KW-0393">Immunoglobulin domain</keyword>
<keyword id="KW-0472">Membrane</keyword>
<keyword id="KW-0675">Receptor</keyword>
<keyword id="KW-1185">Reference proteome</keyword>
<keyword id="KW-0732">Signal</keyword>
<keyword id="KW-1279">T cell receptor</keyword>
<proteinExistence type="evidence at protein level"/>
<feature type="signal peptide" evidence="1">
    <location>
        <begin position="1"/>
        <end position="20"/>
    </location>
</feature>
<feature type="chain" id="PRO_5001974453" description="Probable non-functional T cell receptor gamma variable" evidence="1">
    <location>
        <begin position="21"/>
        <end position="117"/>
    </location>
</feature>
<feature type="domain" description="Ig-like" evidence="2">
    <location>
        <begin position="21"/>
        <end position="117" status="greater than"/>
    </location>
</feature>
<feature type="glycosylation site" description="N-linked (GlcNAc...) asparagine" evidence="1">
    <location>
        <position position="105"/>
    </location>
</feature>
<feature type="disulfide bond" evidence="2">
    <location>
        <begin position="41"/>
        <end position="112"/>
    </location>
</feature>
<feature type="non-terminal residue">
    <location>
        <position position="117"/>
    </location>
</feature>
<sequence>MRWALAVLLAFLSPASQISSNLEGRTKSVTRLTGSSAEITCDLPGASTLYIHWYLHQEGKAPQCLLYYEPYYSRVVLESGITPGKYDTGSTRSNWNLRLQNLIKNDSGFYYCATWDR</sequence>
<gene>
    <name evidence="9 11" type="primary">TRGV1</name>
</gene>
<accession>A0A0A0MS02</accession>
<dbReference type="EMBL" id="AC007245">
    <property type="status" value="NOT_ANNOTATED_CDS"/>
    <property type="molecule type" value="Genomic_DNA"/>
</dbReference>
<dbReference type="SMR" id="A0A0A0MS02"/>
<dbReference type="FunCoup" id="A0A0A0MS02">
    <property type="interactions" value="303"/>
</dbReference>
<dbReference type="GlyCosmos" id="A0A0A0MS02">
    <property type="glycosylation" value="1 site, No reported glycans"/>
</dbReference>
<dbReference type="GlyGen" id="A0A0A0MS02">
    <property type="glycosylation" value="1 site"/>
</dbReference>
<dbReference type="BioMuta" id="TRGV1"/>
<dbReference type="Ensembl" id="ENST00000390348.2">
    <property type="protein sequence ID" value="ENSP00000374871.2"/>
    <property type="gene ID" value="ENSG00000211701.2"/>
</dbReference>
<dbReference type="UCSC" id="uc064cyd.1">
    <property type="organism name" value="human"/>
</dbReference>
<dbReference type="AGR" id="HGNC:12284"/>
<dbReference type="GeneCards" id="TRGV1"/>
<dbReference type="HGNC" id="HGNC:12284">
    <property type="gene designation" value="TRGV1"/>
</dbReference>
<dbReference type="HPA" id="ENSG00000211701">
    <property type="expression patterns" value="Tissue enhanced (lymphoid)"/>
</dbReference>
<dbReference type="neXtProt" id="NX_A0A0A0MS02"/>
<dbReference type="VEuPathDB" id="HostDB:ENSG00000211701"/>
<dbReference type="GeneTree" id="ENSGT00940000153143"/>
<dbReference type="HOGENOM" id="CLU_077975_7_1_1"/>
<dbReference type="InParanoid" id="A0A0A0MS02"/>
<dbReference type="OMA" id="TATNCKV"/>
<dbReference type="OrthoDB" id="9628507at2759"/>
<dbReference type="PAN-GO" id="A0A0A0MS02">
    <property type="GO annotations" value="1 GO annotation based on evolutionary models"/>
</dbReference>
<dbReference type="PhylomeDB" id="A0A0A0MS02"/>
<dbReference type="SignaLink" id="A0A0A0MS02"/>
<dbReference type="PRO" id="PR:A0A0A0MS02"/>
<dbReference type="Proteomes" id="UP000005640">
    <property type="component" value="Chromosome 7"/>
</dbReference>
<dbReference type="RNAct" id="A0A0A0MS02">
    <property type="molecule type" value="protein"/>
</dbReference>
<dbReference type="Bgee" id="ENSG00000211701">
    <property type="expression patterns" value="Expressed in primordial germ cell in gonad and 60 other cell types or tissues"/>
</dbReference>
<dbReference type="GO" id="GO:0009897">
    <property type="term" value="C:external side of plasma membrane"/>
    <property type="evidence" value="ECO:0000318"/>
    <property type="project" value="GO_Central"/>
</dbReference>
<dbReference type="GO" id="GO:0042101">
    <property type="term" value="C:T cell receptor complex"/>
    <property type="evidence" value="ECO:0007669"/>
    <property type="project" value="UniProtKB-KW"/>
</dbReference>
<dbReference type="GO" id="GO:0002250">
    <property type="term" value="P:adaptive immune response"/>
    <property type="evidence" value="ECO:0007669"/>
    <property type="project" value="UniProtKB-KW"/>
</dbReference>
<dbReference type="FunFam" id="2.60.40.10:FF:001866">
    <property type="entry name" value="T cell receptor gamma variable 3"/>
    <property type="match status" value="1"/>
</dbReference>
<dbReference type="Gene3D" id="2.60.40.10">
    <property type="entry name" value="Immunoglobulins"/>
    <property type="match status" value="1"/>
</dbReference>
<dbReference type="InterPro" id="IPR007110">
    <property type="entry name" value="Ig-like_dom"/>
</dbReference>
<dbReference type="InterPro" id="IPR036179">
    <property type="entry name" value="Ig-like_dom_sf"/>
</dbReference>
<dbReference type="InterPro" id="IPR013783">
    <property type="entry name" value="Ig-like_fold"/>
</dbReference>
<dbReference type="InterPro" id="IPR013106">
    <property type="entry name" value="Ig_V-set"/>
</dbReference>
<dbReference type="InterPro" id="IPR051117">
    <property type="entry name" value="TRG_var/const_region"/>
</dbReference>
<dbReference type="PANTHER" id="PTHR19256:SF48">
    <property type="entry name" value="NON-FUNCTIONAL T CELL RECEPTOR GAMMA VARIABLE-RELATED"/>
    <property type="match status" value="1"/>
</dbReference>
<dbReference type="PANTHER" id="PTHR19256">
    <property type="entry name" value="T-CELL RECEPTOR GAMMA CHAIN"/>
    <property type="match status" value="1"/>
</dbReference>
<dbReference type="Pfam" id="PF07686">
    <property type="entry name" value="V-set"/>
    <property type="match status" value="1"/>
</dbReference>
<dbReference type="SMART" id="SM00406">
    <property type="entry name" value="IGv"/>
    <property type="match status" value="1"/>
</dbReference>
<dbReference type="SUPFAM" id="SSF48726">
    <property type="entry name" value="Immunoglobulin"/>
    <property type="match status" value="1"/>
</dbReference>
<dbReference type="PROSITE" id="PS50835">
    <property type="entry name" value="IG_LIKE"/>
    <property type="match status" value="1"/>
</dbReference>
<organism>
    <name type="scientific">Homo sapiens</name>
    <name type="common">Human</name>
    <dbReference type="NCBI Taxonomy" id="9606"/>
    <lineage>
        <taxon>Eukaryota</taxon>
        <taxon>Metazoa</taxon>
        <taxon>Chordata</taxon>
        <taxon>Craniata</taxon>
        <taxon>Vertebrata</taxon>
        <taxon>Euteleostomi</taxon>
        <taxon>Mammalia</taxon>
        <taxon>Eutheria</taxon>
        <taxon>Euarchontoglires</taxon>
        <taxon>Primates</taxon>
        <taxon>Haplorrhini</taxon>
        <taxon>Catarrhini</taxon>
        <taxon>Hominidae</taxon>
        <taxon>Homo</taxon>
    </lineage>
</organism>
<comment type="function">
    <text evidence="3 4 5 6 7">Probable non-functional open reading frame (ORF) of V region of the variable domain of T cell receptor (TR) gamma chain (PubMed:24600447). Non-functional ORF generally cannot participate in the synthesis of a productive T cell receptor (TR) chain due to altered V-(D)-J or switch recombination and/or splicing site (at mRNA level) and/or conserved amino acid change (protein level) (PubMed:9619395). Gamma-delta TRs recognize a variety of self and foreign non-peptide antigens frequently expressed at the epithelial boundaries between the host and external environment, including endogenous lipids presented by MH-like protein CD1D and phosphoantigens presented by butyrophilin-like molecule BTN3A1. Upon antigen recognition induces rapid, innate-like immune responses involved in pathogen clearance and tissue repair (PubMed:23348415, PubMed:28920588). Binding of gamma-delta TR complex to antigen triggers phosphorylation of immunoreceptor tyrosine-based activation motifs (ITAMs) in the CD3 chains by the LCK and FYN kinases, allowing the recruitment, phosphorylation, and activation of ZAP70 that facilitates phosphorylation of the scaffolding proteins LCP2 and LAT. This lead to the formation of a supramolecular signalosome that recruits the phospholipase PLCG1, resulting in calcium mobilization and ERK activation, ultimately leading to T cell expansion and differentiation into effector cells (PubMed:25674089). Gamma-delta TRs are produced through somatic rearrangement of a limited repertoire of variable (V), diversity (D), and joining (J) genes. The potential diversity of gamma-delta TRs is conferred by the unique ability to rearrange (D) genes in tandem and to utilize all three reading frames. The combinatorial diversity is considerably increased by the sequence exonuclease trimming and random nucleotide (N) region additions which occur during the V-(D)-J rearrangements (PubMed:24387714).</text>
</comment>
<comment type="subunit">
    <text evidence="6">Gamma-delta TR is a heterodimer composed of a gamma and delta chain; disulfide-linked. The gamma-delta TR is associated with the transmembrane signaling CD3 coreceptor proteins following the stoichiometry: a single gamma-delta TR heterodimer associates with one CD3D-CD3E heterodimer, one CD3G-CD3E heterodimer and one CD247 homodimer forming a stable octameric structure. Upon activation, gamma-delta TR complex associates with FCER1G to initiate intracellular signaling.</text>
</comment>
<comment type="subcellular location">
    <subcellularLocation>
        <location evidence="10">Cell membrane</location>
    </subcellularLocation>
</comment>
<comment type="polymorphism">
    <text evidence="10">There are several alleles. The sequence shown is that of IMGT allele TRGV1*01.</text>
</comment>
<comment type="caution">
    <text evidence="8 10">Most probably a non-functional protein that cannot participate to the synthesis of a productive T cell receptor (TR) chain due to an unusual recombination signal (RS) sequence altering V-(D)-J recombination (PubMed:9619395).</text>
</comment>